<comment type="function">
    <text evidence="5 6 7">Transcriptional coactivator that stimulates GCN4-dependent transcriptional activity by bridging the DNA-binding region of GCN4 and TBP (SPT15), thereby recruiting TBP to GCN4-bound promoters (PubMed:9710580). Involved in induction of the ribosome quality control (RQC) pathway; a pathway that degrades nascent peptide chains during problematic translation (PubMed:30465652, PubMed:36583309). Required to prevent stalled ribosomes from frameshifting (PubMed:30465652, PubMed:36583309).</text>
</comment>
<comment type="subunit">
    <text evidence="6 7">Interacts with TBP and the transcription factor GCN4 (PubMed:9710580). Interacts with RPS3/us3 (PubMed:36583309).</text>
</comment>
<comment type="subcellular location">
    <subcellularLocation>
        <location evidence="3">Cytoplasm</location>
    </subcellularLocation>
    <subcellularLocation>
        <location evidence="3">Nucleus</location>
    </subcellularLocation>
</comment>
<comment type="miscellaneous">
    <text evidence="4">Present with 47277 molecules/cell in log phase SD medium.</text>
</comment>
<comment type="similarity">
    <text evidence="8">Belongs to the MBF1 family.</text>
</comment>
<comment type="sequence caution" evidence="8">
    <conflict type="frameshift">
        <sequence resource="EMBL-CDS" id="CAA99527"/>
    </conflict>
</comment>
<comment type="sequence caution" evidence="8">
    <conflict type="frameshift">
        <sequence resource="EMBL-CDS" id="CAA99530"/>
    </conflict>
</comment>
<keyword id="KW-0002">3D-structure</keyword>
<keyword id="KW-0963">Cytoplasm</keyword>
<keyword id="KW-0903">Direct protein sequencing</keyword>
<keyword id="KW-0238">DNA-binding</keyword>
<keyword id="KW-0539">Nucleus</keyword>
<keyword id="KW-0597">Phosphoprotein</keyword>
<keyword id="KW-1185">Reference proteome</keyword>
<keyword id="KW-0804">Transcription</keyword>
<keyword id="KW-0805">Transcription regulation</keyword>
<accession>O14467</accession>
<accession>D6W2Z8</accession>
<accession>Q7LGJ8</accession>
<accession>Q86ZS7</accession>
<sequence>MSDWDTNTIIGSRARAGGSGPRANVARSQGQINAARRQGLVVSVDKKYGSTNTRGDNEGQRLTKVDRETDIVKPKKLDPNVGRAISRARTDKKMSQKDLATKINEKPTVVNDYEAARAIPNQQVLSKLERALGVKLRGNNIGSPLGAPKKK</sequence>
<gene>
    <name type="primary">MBF1</name>
    <name type="synonym">SUF13</name>
    <name type="ordered locus">YOR298C-A</name>
</gene>
<proteinExistence type="evidence at protein level"/>
<reference key="1">
    <citation type="journal article" date="1998" name="Mol. Cell. Biol.">
        <title>Yeast coactivator MBF1 mediates GCN4-dependent transcriptional activation.</title>
        <authorList>
            <person name="Takemaru K."/>
            <person name="Harashima S."/>
            <person name="Ueda H."/>
            <person name="Hirose S."/>
        </authorList>
    </citation>
    <scope>NUCLEOTIDE SEQUENCE [GENOMIC DNA]</scope>
    <scope>INTERACTION WITH GCN4 AND TBP</scope>
    <scope>MUTAGENESIS OF ASP-112</scope>
    <scope>FUNCTION</scope>
    <source>
        <strain>KT130</strain>
    </source>
</reference>
<reference key="2">
    <citation type="journal article" date="1997" name="Nature">
        <title>The nucleotide sequence of Saccharomyces cerevisiae chromosome XV.</title>
        <authorList>
            <person name="Dujon B."/>
            <person name="Albermann K."/>
            <person name="Aldea M."/>
            <person name="Alexandraki D."/>
            <person name="Ansorge W."/>
            <person name="Arino J."/>
            <person name="Benes V."/>
            <person name="Bohn C."/>
            <person name="Bolotin-Fukuhara M."/>
            <person name="Bordonne R."/>
            <person name="Boyer J."/>
            <person name="Camasses A."/>
            <person name="Casamayor A."/>
            <person name="Casas C."/>
            <person name="Cheret G."/>
            <person name="Cziepluch C."/>
            <person name="Daignan-Fornier B."/>
            <person name="Dang V.-D."/>
            <person name="de Haan M."/>
            <person name="Delius H."/>
            <person name="Durand P."/>
            <person name="Fairhead C."/>
            <person name="Feldmann H."/>
            <person name="Gaillon L."/>
            <person name="Galisson F."/>
            <person name="Gamo F.-J."/>
            <person name="Gancedo C."/>
            <person name="Goffeau A."/>
            <person name="Goulding S.E."/>
            <person name="Grivell L.A."/>
            <person name="Habbig B."/>
            <person name="Hand N.J."/>
            <person name="Hani J."/>
            <person name="Hattenhorst U."/>
            <person name="Hebling U."/>
            <person name="Hernando Y."/>
            <person name="Herrero E."/>
            <person name="Heumann K."/>
            <person name="Hiesel R."/>
            <person name="Hilger F."/>
            <person name="Hofmann B."/>
            <person name="Hollenberg C.P."/>
            <person name="Hughes B."/>
            <person name="Jauniaux J.-C."/>
            <person name="Kalogeropoulos A."/>
            <person name="Katsoulou C."/>
            <person name="Kordes E."/>
            <person name="Lafuente M.J."/>
            <person name="Landt O."/>
            <person name="Louis E.J."/>
            <person name="Maarse A.C."/>
            <person name="Madania A."/>
            <person name="Mannhaupt G."/>
            <person name="Marck C."/>
            <person name="Martin R.P."/>
            <person name="Mewes H.-W."/>
            <person name="Michaux G."/>
            <person name="Paces V."/>
            <person name="Parle-McDermott A.G."/>
            <person name="Pearson B.M."/>
            <person name="Perrin A."/>
            <person name="Pettersson B."/>
            <person name="Poch O."/>
            <person name="Pohl T.M."/>
            <person name="Poirey R."/>
            <person name="Portetelle D."/>
            <person name="Pujol A."/>
            <person name="Purnelle B."/>
            <person name="Ramezani Rad M."/>
            <person name="Rechmann S."/>
            <person name="Schwager C."/>
            <person name="Schweizer M."/>
            <person name="Sor F."/>
            <person name="Sterky F."/>
            <person name="Tarassov I.A."/>
            <person name="Teodoru C."/>
            <person name="Tettelin H."/>
            <person name="Thierry A."/>
            <person name="Tobiasch E."/>
            <person name="Tzermia M."/>
            <person name="Uhlen M."/>
            <person name="Unseld M."/>
            <person name="Valens M."/>
            <person name="Vandenbol M."/>
            <person name="Vetter I."/>
            <person name="Vlcek C."/>
            <person name="Voet M."/>
            <person name="Volckaert G."/>
            <person name="Voss H."/>
            <person name="Wambutt R."/>
            <person name="Wedler H."/>
            <person name="Wiemann S."/>
            <person name="Winsor B."/>
            <person name="Wolfe K.H."/>
            <person name="Zollner A."/>
            <person name="Zumstein E."/>
            <person name="Kleine K."/>
        </authorList>
    </citation>
    <scope>NUCLEOTIDE SEQUENCE [LARGE SCALE GENOMIC DNA]</scope>
    <source>
        <strain>ATCC 204508 / S288c</strain>
    </source>
</reference>
<reference key="3">
    <citation type="journal article" date="2014" name="G3 (Bethesda)">
        <title>The reference genome sequence of Saccharomyces cerevisiae: Then and now.</title>
        <authorList>
            <person name="Engel S.R."/>
            <person name="Dietrich F.S."/>
            <person name="Fisk D.G."/>
            <person name="Binkley G."/>
            <person name="Balakrishnan R."/>
            <person name="Costanzo M.C."/>
            <person name="Dwight S.S."/>
            <person name="Hitz B.C."/>
            <person name="Karra K."/>
            <person name="Nash R.S."/>
            <person name="Weng S."/>
            <person name="Wong E.D."/>
            <person name="Lloyd P."/>
            <person name="Skrzypek M.S."/>
            <person name="Miyasato S.R."/>
            <person name="Simison M."/>
            <person name="Cherry J.M."/>
        </authorList>
    </citation>
    <scope>GENOME REANNOTATION</scope>
    <source>
        <strain>ATCC 204508 / S288c</strain>
    </source>
</reference>
<reference key="4">
    <citation type="journal article" date="2003" name="Genome Biol.">
        <title>Reinvestigation of the Saccharomyces cerevisiae genome annotation by comparison to the genome of a related fungus: Ashbya gossypii.</title>
        <authorList>
            <person name="Brachat S."/>
            <person name="Dietrich F.S."/>
            <person name="Voegeli S."/>
            <person name="Zhang Z."/>
            <person name="Stuart L."/>
            <person name="Lerch A."/>
            <person name="Gates K."/>
            <person name="Gaffney T.D."/>
            <person name="Philippsen P."/>
        </authorList>
    </citation>
    <scope>NUCLEOTIDE SEQUENCE [GENOMIC DNA] OF 1-58</scope>
    <source>
        <strain>ATCC 204511 / S288c / AB972</strain>
    </source>
</reference>
<reference key="5">
    <citation type="submission" date="2005-05" db="UniProtKB">
        <authorList>
            <person name="Bienvenut W.V."/>
            <person name="Peters C."/>
        </authorList>
    </citation>
    <scope>PROTEIN SEQUENCE OF 76-83; 103-117 AND 138-149</scope>
    <scope>IDENTIFICATION BY MASS SPECTROMETRY</scope>
</reference>
<reference key="6">
    <citation type="journal article" date="2007" name="Genome Res.">
        <title>Approaching a complete repository of sequence-verified protein-encoding clones for Saccharomyces cerevisiae.</title>
        <authorList>
            <person name="Hu Y."/>
            <person name="Rolfs A."/>
            <person name="Bhullar B."/>
            <person name="Murthy T.V.S."/>
            <person name="Zhu C."/>
            <person name="Berger M.F."/>
            <person name="Camargo A.A."/>
            <person name="Kelley F."/>
            <person name="McCarron S."/>
            <person name="Jepson D."/>
            <person name="Richardson A."/>
            <person name="Raphael J."/>
            <person name="Moreira D."/>
            <person name="Taycher E."/>
            <person name="Zuo D."/>
            <person name="Mohr S."/>
            <person name="Kane M.F."/>
            <person name="Williamson J."/>
            <person name="Simpson A.J.G."/>
            <person name="Bulyk M.L."/>
            <person name="Harlow E."/>
            <person name="Marsischky G."/>
            <person name="Kolodner R.D."/>
            <person name="LaBaer J."/>
        </authorList>
    </citation>
    <scope>NUCLEOTIDE SEQUENCE [GENOMIC DNA] OF 94-151</scope>
    <source>
        <strain>ATCC 204508 / S288c</strain>
    </source>
</reference>
<reference key="7">
    <citation type="journal article" date="2003" name="Nature">
        <title>Global analysis of protein localization in budding yeast.</title>
        <authorList>
            <person name="Huh W.-K."/>
            <person name="Falvo J.V."/>
            <person name="Gerke L.C."/>
            <person name="Carroll A.S."/>
            <person name="Howson R.W."/>
            <person name="Weissman J.S."/>
            <person name="O'Shea E.K."/>
        </authorList>
    </citation>
    <scope>SUBCELLULAR LOCATION [LARGE SCALE ANALYSIS]</scope>
</reference>
<reference key="8">
    <citation type="journal article" date="2003" name="Nature">
        <title>Global analysis of protein expression in yeast.</title>
        <authorList>
            <person name="Ghaemmaghami S."/>
            <person name="Huh W.-K."/>
            <person name="Bower K."/>
            <person name="Howson R.W."/>
            <person name="Belle A."/>
            <person name="Dephoure N."/>
            <person name="O'Shea E.K."/>
            <person name="Weissman J.S."/>
        </authorList>
    </citation>
    <scope>LEVEL OF PROTEIN EXPRESSION [LARGE SCALE ANALYSIS]</scope>
</reference>
<reference key="9">
    <citation type="journal article" date="2005" name="Mol. Cell. Proteomics">
        <title>Quantitative phosphoproteomics applied to the yeast pheromone signaling pathway.</title>
        <authorList>
            <person name="Gruhler A."/>
            <person name="Olsen J.V."/>
            <person name="Mohammed S."/>
            <person name="Mortensen P."/>
            <person name="Faergeman N.J."/>
            <person name="Mann M."/>
            <person name="Jensen O.N."/>
        </authorList>
    </citation>
    <scope>PHOSPHORYLATION [LARGE SCALE ANALYSIS] AT SER-143</scope>
    <scope>IDENTIFICATION BY MASS SPECTROMETRY [LARGE SCALE ANALYSIS]</scope>
    <source>
        <strain>YAL6B</strain>
    </source>
</reference>
<reference key="10">
    <citation type="journal article" date="2007" name="J. Proteome Res.">
        <title>Large-scale phosphorylation analysis of alpha-factor-arrested Saccharomyces cerevisiae.</title>
        <authorList>
            <person name="Li X."/>
            <person name="Gerber S.A."/>
            <person name="Rudner A.D."/>
            <person name="Beausoleil S.A."/>
            <person name="Haas W."/>
            <person name="Villen J."/>
            <person name="Elias J.E."/>
            <person name="Gygi S.P."/>
        </authorList>
    </citation>
    <scope>PHOSPHORYLATION [LARGE SCALE ANALYSIS] AT SER-143</scope>
    <scope>IDENTIFICATION BY MASS SPECTROMETRY [LARGE SCALE ANALYSIS]</scope>
    <source>
        <strain>ADR376</strain>
    </source>
</reference>
<reference key="11">
    <citation type="journal article" date="2007" name="Proc. Natl. Acad. Sci. U.S.A.">
        <title>Analysis of phosphorylation sites on proteins from Saccharomyces cerevisiae by electron transfer dissociation (ETD) mass spectrometry.</title>
        <authorList>
            <person name="Chi A."/>
            <person name="Huttenhower C."/>
            <person name="Geer L.Y."/>
            <person name="Coon J.J."/>
            <person name="Syka J.E.P."/>
            <person name="Bai D.L."/>
            <person name="Shabanowitz J."/>
            <person name="Burke D.J."/>
            <person name="Troyanskaya O.G."/>
            <person name="Hunt D.F."/>
        </authorList>
    </citation>
    <scope>PHOSPHORYLATION [LARGE SCALE ANALYSIS] AT SER-143</scope>
    <scope>IDENTIFICATION BY MASS SPECTROMETRY [LARGE SCALE ANALYSIS]</scope>
</reference>
<reference key="12">
    <citation type="journal article" date="2008" name="Mol. Cell. Proteomics">
        <title>A multidimensional chromatography technology for in-depth phosphoproteome analysis.</title>
        <authorList>
            <person name="Albuquerque C.P."/>
            <person name="Smolka M.B."/>
            <person name="Payne S.H."/>
            <person name="Bafna V."/>
            <person name="Eng J."/>
            <person name="Zhou H."/>
        </authorList>
    </citation>
    <scope>PHOSPHORYLATION [LARGE SCALE ANALYSIS] AT SER-143</scope>
    <scope>IDENTIFICATION BY MASS SPECTROMETRY [LARGE SCALE ANALYSIS]</scope>
</reference>
<reference key="13">
    <citation type="journal article" date="2009" name="Science">
        <title>Global analysis of Cdk1 substrate phosphorylation sites provides insights into evolution.</title>
        <authorList>
            <person name="Holt L.J."/>
            <person name="Tuch B.B."/>
            <person name="Villen J."/>
            <person name="Johnson A.D."/>
            <person name="Gygi S.P."/>
            <person name="Morgan D.O."/>
        </authorList>
    </citation>
    <scope>PHOSPHORYLATION [LARGE SCALE ANALYSIS] AT SER-143</scope>
    <scope>IDENTIFICATION BY MASS SPECTROMETRY [LARGE SCALE ANALYSIS]</scope>
</reference>
<reference key="14">
    <citation type="journal article" date="2018" name="Elife">
        <title>Multi-protein bridging factor 1(Mbf1), Rps3 and Asc1 prevent stalled ribosomes from frameshifting.</title>
        <authorList>
            <person name="Wang J."/>
            <person name="Zhou J."/>
            <person name="Yang Q."/>
            <person name="Grayhack E.J."/>
        </authorList>
    </citation>
    <scope>FUNCTION</scope>
    <scope>MUTAGENESIS OF ARG-61; LYS-64; SER-86 AND ARG-89</scope>
</reference>
<reference key="15">
    <citation type="journal article" date="2023" name="Nucleic Acids Res.">
        <title>Two modes of Cue2-mediated mRNA cleavage with distinct substrate recognition initiate no-go decay.</title>
        <authorList>
            <person name="Tomomatsu S."/>
            <person name="Watanabe A."/>
            <person name="Tesina P."/>
            <person name="Hashimoto S."/>
            <person name="Ikeuchi K."/>
            <person name="Li S."/>
            <person name="Matsuo Y."/>
            <person name="Beckmann R."/>
            <person name="Inada T."/>
        </authorList>
    </citation>
    <scope>FUNCTION</scope>
    <scope>INTERACTION WITH RPS3</scope>
    <scope>MUTAGENESIS OF 66-ASP--VAL-72 AND 69-THR--VAL-72</scope>
</reference>
<name>MBF1_YEAST</name>
<evidence type="ECO:0000255" key="1">
    <source>
        <dbReference type="PROSITE-ProRule" id="PRU00257"/>
    </source>
</evidence>
<evidence type="ECO:0000256" key="2">
    <source>
        <dbReference type="SAM" id="MobiDB-lite"/>
    </source>
</evidence>
<evidence type="ECO:0000269" key="3">
    <source>
    </source>
</evidence>
<evidence type="ECO:0000269" key="4">
    <source>
    </source>
</evidence>
<evidence type="ECO:0000269" key="5">
    <source>
    </source>
</evidence>
<evidence type="ECO:0000269" key="6">
    <source>
    </source>
</evidence>
<evidence type="ECO:0000269" key="7">
    <source>
    </source>
</evidence>
<evidence type="ECO:0000305" key="8"/>
<evidence type="ECO:0007744" key="9">
    <source>
    </source>
</evidence>
<evidence type="ECO:0007744" key="10">
    <source>
    </source>
</evidence>
<evidence type="ECO:0007744" key="11">
    <source>
    </source>
</evidence>
<evidence type="ECO:0007744" key="12">
    <source>
    </source>
</evidence>
<evidence type="ECO:0007744" key="13">
    <source>
    </source>
</evidence>
<evidence type="ECO:0007829" key="14">
    <source>
        <dbReference type="PDB" id="6ZVI"/>
    </source>
</evidence>
<feature type="chain" id="PRO_0000149814" description="Multiprotein-bridging factor 1">
    <location>
        <begin position="1"/>
        <end position="151"/>
    </location>
</feature>
<feature type="domain" description="HTH cro/C1-type" evidence="1">
    <location>
        <begin position="85"/>
        <end position="139"/>
    </location>
</feature>
<feature type="DNA-binding region" description="H-T-H motif" evidence="1">
    <location>
        <begin position="96"/>
        <end position="115"/>
    </location>
</feature>
<feature type="region of interest" description="Disordered" evidence="2">
    <location>
        <begin position="1"/>
        <end position="29"/>
    </location>
</feature>
<feature type="region of interest" description="Essential for TBP-binding">
    <location>
        <begin position="41"/>
        <end position="119"/>
    </location>
</feature>
<feature type="region of interest" description="Disordered" evidence="2">
    <location>
        <begin position="78"/>
        <end position="98"/>
    </location>
</feature>
<feature type="compositionally biased region" description="Basic and acidic residues" evidence="2">
    <location>
        <begin position="88"/>
        <end position="98"/>
    </location>
</feature>
<feature type="modified residue" description="Phosphoserine" evidence="9 10 11 12 13">
    <location>
        <position position="143"/>
    </location>
</feature>
<feature type="mutagenesis site" description="Does not affect ability to prevent stalled ribosomes from frameshifting." evidence="5">
    <original>R</original>
    <variation>T</variation>
    <location>
        <position position="61"/>
    </location>
</feature>
<feature type="mutagenesis site" description="Does not affect ability to prevent stalled ribosomes from frameshifting." evidence="5">
    <original>K</original>
    <variation>E</variation>
    <location>
        <position position="64"/>
    </location>
</feature>
<feature type="mutagenesis site" description="Decreased interaction with the ribosome." evidence="6">
    <original>DRETDIV</original>
    <variation>RREAAAA</variation>
    <location>
        <begin position="66"/>
        <end position="72"/>
    </location>
</feature>
<feature type="mutagenesis site" description="Slightly decreased interaction with the ribosome." evidence="6">
    <original>TDIV</original>
    <variation>AAAA</variation>
    <location>
        <begin position="69"/>
        <end position="72"/>
    </location>
</feature>
<feature type="mutagenesis site" description="Decreased ability to prevent stalled ribosomes from frameshifting." evidence="5">
    <original>S</original>
    <variation>P</variation>
    <location>
        <position position="86"/>
    </location>
</feature>
<feature type="mutagenesis site" description="Decreased ability to prevent stalled ribosomes from frameshifting." evidence="5">
    <original>R</original>
    <variation>G</variation>
    <location>
        <position position="89"/>
    </location>
</feature>
<feature type="mutagenesis site" description="Decreased ability to prevent stalled ribosomes from frameshifting." evidence="5">
    <original>R</original>
    <variation>K</variation>
    <location>
        <position position="89"/>
    </location>
</feature>
<feature type="mutagenesis site" description="Reduces interaction to TBP." evidence="7">
    <original>D</original>
    <variation>A</variation>
    <location>
        <position position="112"/>
    </location>
</feature>
<feature type="strand" evidence="14">
    <location>
        <begin position="29"/>
        <end position="31"/>
    </location>
</feature>
<feature type="helix" evidence="14">
    <location>
        <begin position="34"/>
        <end position="36"/>
    </location>
</feature>
<feature type="strand" evidence="14">
    <location>
        <begin position="51"/>
        <end position="53"/>
    </location>
</feature>
<feature type="turn" evidence="14">
    <location>
        <begin position="57"/>
        <end position="60"/>
    </location>
</feature>
<feature type="helix" evidence="14">
    <location>
        <begin position="61"/>
        <end position="67"/>
    </location>
</feature>
<feature type="helix" evidence="14">
    <location>
        <begin position="79"/>
        <end position="90"/>
    </location>
</feature>
<feature type="turn" evidence="14">
    <location>
        <begin position="91"/>
        <end position="93"/>
    </location>
</feature>
<feature type="helix" evidence="14">
    <location>
        <begin position="96"/>
        <end position="102"/>
    </location>
</feature>
<feature type="turn" evidence="14">
    <location>
        <begin position="107"/>
        <end position="110"/>
    </location>
</feature>
<feature type="helix" evidence="14">
    <location>
        <begin position="111"/>
        <end position="113"/>
    </location>
</feature>
<feature type="strand" evidence="14">
    <location>
        <begin position="114"/>
        <end position="116"/>
    </location>
</feature>
<feature type="helix" evidence="14">
    <location>
        <begin position="122"/>
        <end position="132"/>
    </location>
</feature>
<dbReference type="EMBL" id="AB017593">
    <property type="protein sequence ID" value="BAA33217.1"/>
    <property type="molecule type" value="Genomic_DNA"/>
</dbReference>
<dbReference type="EMBL" id="Z75206">
    <property type="protein sequence ID" value="CAA99527.1"/>
    <property type="status" value="ALT_FRAME"/>
    <property type="molecule type" value="Genomic_DNA"/>
</dbReference>
<dbReference type="EMBL" id="Z75207">
    <property type="protein sequence ID" value="CAA99530.1"/>
    <property type="status" value="ALT_FRAME"/>
    <property type="molecule type" value="Genomic_DNA"/>
</dbReference>
<dbReference type="EMBL" id="AY260886">
    <property type="protein sequence ID" value="AAP21754.1"/>
    <property type="molecule type" value="Genomic_DNA"/>
</dbReference>
<dbReference type="EMBL" id="AY692753">
    <property type="protein sequence ID" value="AAT92772.1"/>
    <property type="molecule type" value="Genomic_DNA"/>
</dbReference>
<dbReference type="EMBL" id="BK006948">
    <property type="protein sequence ID" value="DAA11064.1"/>
    <property type="molecule type" value="Genomic_DNA"/>
</dbReference>
<dbReference type="PIR" id="S72394">
    <property type="entry name" value="S72394"/>
</dbReference>
<dbReference type="RefSeq" id="NP_014942.4">
    <property type="nucleotide sequence ID" value="NM_001184346.3"/>
</dbReference>
<dbReference type="PDB" id="6ZVI">
    <property type="method" value="EM"/>
    <property type="resolution" value="3.00 A"/>
    <property type="chains" value="T=27-137"/>
</dbReference>
<dbReference type="PDB" id="7NRD">
    <property type="method" value="EM"/>
    <property type="resolution" value="4.36 A"/>
    <property type="chains" value="Sh=26-145"/>
</dbReference>
<dbReference type="PDB" id="9F9S">
    <property type="method" value="EM"/>
    <property type="resolution" value="2.90 A"/>
    <property type="chains" value="CN=1-151"/>
</dbReference>
<dbReference type="PDBsum" id="6ZVI"/>
<dbReference type="PDBsum" id="7NRD"/>
<dbReference type="PDBsum" id="9F9S"/>
<dbReference type="EMDB" id="EMD-12535"/>
<dbReference type="EMDB" id="EMD-50259"/>
<dbReference type="SMR" id="O14467"/>
<dbReference type="BioGRID" id="34687">
    <property type="interactions" value="239"/>
</dbReference>
<dbReference type="DIP" id="DIP-8708N"/>
<dbReference type="FunCoup" id="O14467">
    <property type="interactions" value="947"/>
</dbReference>
<dbReference type="IntAct" id="O14467">
    <property type="interactions" value="7"/>
</dbReference>
<dbReference type="MINT" id="O14467"/>
<dbReference type="STRING" id="4932.YOR298C-A"/>
<dbReference type="GlyGen" id="O14467">
    <property type="glycosylation" value="2 sites, 1 O-linked glycan (2 sites)"/>
</dbReference>
<dbReference type="iPTMnet" id="O14467"/>
<dbReference type="PaxDb" id="4932-YOR298C-A"/>
<dbReference type="PeptideAtlas" id="O14467"/>
<dbReference type="TopDownProteomics" id="O14467"/>
<dbReference type="EnsemblFungi" id="YOR298C-A_mRNA">
    <property type="protein sequence ID" value="YOR298C-A"/>
    <property type="gene ID" value="YOR298C-A"/>
</dbReference>
<dbReference type="GeneID" id="854474"/>
<dbReference type="KEGG" id="sce:YOR298C-A"/>
<dbReference type="AGR" id="SGD:S000007253"/>
<dbReference type="SGD" id="S000007253">
    <property type="gene designation" value="MBF1"/>
</dbReference>
<dbReference type="VEuPathDB" id="FungiDB:YOR298C-A"/>
<dbReference type="eggNOG" id="KOG3398">
    <property type="taxonomic scope" value="Eukaryota"/>
</dbReference>
<dbReference type="GeneTree" id="ENSGT00390000008519"/>
<dbReference type="HOGENOM" id="CLU_112609_0_1_1"/>
<dbReference type="InParanoid" id="O14467"/>
<dbReference type="OMA" id="GKNKSCK"/>
<dbReference type="OrthoDB" id="10253401at2759"/>
<dbReference type="BioCyc" id="YEAST:G3O-33879-MONOMER"/>
<dbReference type="BioGRID-ORCS" id="854474">
    <property type="hits" value="6 hits in 10 CRISPR screens"/>
</dbReference>
<dbReference type="PRO" id="PR:O14467"/>
<dbReference type="Proteomes" id="UP000002311">
    <property type="component" value="Chromosome XV"/>
</dbReference>
<dbReference type="RNAct" id="O14467">
    <property type="molecule type" value="protein"/>
</dbReference>
<dbReference type="GO" id="GO:0005737">
    <property type="term" value="C:cytoplasm"/>
    <property type="evidence" value="ECO:0000314"/>
    <property type="project" value="SGD"/>
</dbReference>
<dbReference type="GO" id="GO:0005739">
    <property type="term" value="C:mitochondrion"/>
    <property type="evidence" value="ECO:0007005"/>
    <property type="project" value="SGD"/>
</dbReference>
<dbReference type="GO" id="GO:0005634">
    <property type="term" value="C:nucleus"/>
    <property type="evidence" value="ECO:0000314"/>
    <property type="project" value="SGD"/>
</dbReference>
<dbReference type="GO" id="GO:0003677">
    <property type="term" value="F:DNA binding"/>
    <property type="evidence" value="ECO:0007669"/>
    <property type="project" value="UniProtKB-KW"/>
</dbReference>
<dbReference type="GO" id="GO:0043022">
    <property type="term" value="F:ribosome binding"/>
    <property type="evidence" value="ECO:0000314"/>
    <property type="project" value="UniProtKB"/>
</dbReference>
<dbReference type="GO" id="GO:0140469">
    <property type="term" value="P:GCN2-mediated signaling"/>
    <property type="evidence" value="ECO:0000315"/>
    <property type="project" value="SGD"/>
</dbReference>
<dbReference type="GO" id="GO:1990145">
    <property type="term" value="P:maintenance of translational fidelity"/>
    <property type="evidence" value="ECO:0000314"/>
    <property type="project" value="UniProtKB"/>
</dbReference>
<dbReference type="GO" id="GO:0072344">
    <property type="term" value="P:rescue of stalled ribosome"/>
    <property type="evidence" value="ECO:0000314"/>
    <property type="project" value="UniProtKB"/>
</dbReference>
<dbReference type="CDD" id="cd00093">
    <property type="entry name" value="HTH_XRE"/>
    <property type="match status" value="1"/>
</dbReference>
<dbReference type="FunFam" id="1.10.260.40:FF:000015">
    <property type="entry name" value="Endothelial differentiation-related factor 1"/>
    <property type="match status" value="1"/>
</dbReference>
<dbReference type="Gene3D" id="1.10.260.40">
    <property type="entry name" value="lambda repressor-like DNA-binding domains"/>
    <property type="match status" value="1"/>
</dbReference>
<dbReference type="InterPro" id="IPR001387">
    <property type="entry name" value="Cro/C1-type_HTH"/>
</dbReference>
<dbReference type="InterPro" id="IPR010982">
    <property type="entry name" value="Lambda_DNA-bd_dom_sf"/>
</dbReference>
<dbReference type="InterPro" id="IPR013729">
    <property type="entry name" value="MBF1_N"/>
</dbReference>
<dbReference type="PANTHER" id="PTHR10245:SF15">
    <property type="entry name" value="ENDOTHELIAL DIFFERENTIATION-RELATED FACTOR 1"/>
    <property type="match status" value="1"/>
</dbReference>
<dbReference type="PANTHER" id="PTHR10245">
    <property type="entry name" value="ENDOTHELIAL DIFFERENTIATION-RELATED FACTOR 1 MULTIPROTEIN BRIDGING FACTOR 1"/>
    <property type="match status" value="1"/>
</dbReference>
<dbReference type="Pfam" id="PF01381">
    <property type="entry name" value="HTH_3"/>
    <property type="match status" value="1"/>
</dbReference>
<dbReference type="Pfam" id="PF08523">
    <property type="entry name" value="MBF1"/>
    <property type="match status" value="1"/>
</dbReference>
<dbReference type="SMART" id="SM00530">
    <property type="entry name" value="HTH_XRE"/>
    <property type="match status" value="1"/>
</dbReference>
<dbReference type="SUPFAM" id="SSF47413">
    <property type="entry name" value="lambda repressor-like DNA-binding domains"/>
    <property type="match status" value="1"/>
</dbReference>
<dbReference type="PROSITE" id="PS50943">
    <property type="entry name" value="HTH_CROC1"/>
    <property type="match status" value="1"/>
</dbReference>
<protein>
    <recommendedName>
        <fullName>Multiprotein-bridging factor 1</fullName>
    </recommendedName>
    <alternativeName>
        <fullName>Suppressor of frameshift mutations protein 13</fullName>
    </alternativeName>
</protein>
<organism>
    <name type="scientific">Saccharomyces cerevisiae (strain ATCC 204508 / S288c)</name>
    <name type="common">Baker's yeast</name>
    <dbReference type="NCBI Taxonomy" id="559292"/>
    <lineage>
        <taxon>Eukaryota</taxon>
        <taxon>Fungi</taxon>
        <taxon>Dikarya</taxon>
        <taxon>Ascomycota</taxon>
        <taxon>Saccharomycotina</taxon>
        <taxon>Saccharomycetes</taxon>
        <taxon>Saccharomycetales</taxon>
        <taxon>Saccharomycetaceae</taxon>
        <taxon>Saccharomyces</taxon>
    </lineage>
</organism>